<accession>A0AIJ9</accession>
<proteinExistence type="inferred from homology"/>
<protein>
    <recommendedName>
        <fullName evidence="1">Putative competence-damage inducible protein</fullName>
    </recommendedName>
</protein>
<name>CINA_LISW6</name>
<sequence length="415" mass="45829">MASAEIIAVGTELLLGQIVNSNAAFISQELAADGIYVYHHTVVGDNPERLKEVIKIAENRSDILIFTGGLGPTEDDITKQILADHLNKRLVEDEFHMNKITEYFTSRSRKMTENNKLQAVIIEDSVVLNNDYGFAAGMYLKANKHTYILLPGPPSEMKPMFTSYANPLLVSENGEKIILESKIMRFFGIGESQLAADLNDLILNQVNPTLATYAGDNEVVVRITATASTKEKAAALVKDMEEEILRRDGTFLYGYGEVSLPEHVTAMLLERKMTIAAAESFTAGLFQAEIARFPGISSIFKGGMVTYSEEVKQSMLQVPAEVIEEHGVVSSECAKVMAENVRRLCDTDIGISFTGVAGPDSLEGHPAGTIWIGLSVKGNESEAFQYVYGRDRNHNRRRAVKQGFQLIKHFLETNK</sequence>
<evidence type="ECO:0000255" key="1">
    <source>
        <dbReference type="HAMAP-Rule" id="MF_00226"/>
    </source>
</evidence>
<gene>
    <name evidence="1" type="primary">cinA</name>
    <name type="ordered locus">lwe1413</name>
</gene>
<reference key="1">
    <citation type="journal article" date="2006" name="J. Bacteriol.">
        <title>Whole-genome sequence of Listeria welshimeri reveals common steps in genome reduction with Listeria innocua as compared to Listeria monocytogenes.</title>
        <authorList>
            <person name="Hain T."/>
            <person name="Steinweg C."/>
            <person name="Kuenne C.T."/>
            <person name="Billion A."/>
            <person name="Ghai R."/>
            <person name="Chatterjee S.S."/>
            <person name="Domann E."/>
            <person name="Kaerst U."/>
            <person name="Goesmann A."/>
            <person name="Bekel T."/>
            <person name="Bartels D."/>
            <person name="Kaiser O."/>
            <person name="Meyer F."/>
            <person name="Puehler A."/>
            <person name="Weisshaar B."/>
            <person name="Wehland J."/>
            <person name="Liang C."/>
            <person name="Dandekar T."/>
            <person name="Lampidis R."/>
            <person name="Kreft J."/>
            <person name="Goebel W."/>
            <person name="Chakraborty T."/>
        </authorList>
    </citation>
    <scope>NUCLEOTIDE SEQUENCE [LARGE SCALE GENOMIC DNA]</scope>
    <source>
        <strain>ATCC 35897 / DSM 20650 / CCUG 15529 / CIP 8149 / NCTC 11857 / SLCC 5334 / V8</strain>
    </source>
</reference>
<comment type="similarity">
    <text evidence="1">Belongs to the CinA family.</text>
</comment>
<dbReference type="EMBL" id="AM263198">
    <property type="protein sequence ID" value="CAK20831.1"/>
    <property type="molecule type" value="Genomic_DNA"/>
</dbReference>
<dbReference type="RefSeq" id="WP_011702209.1">
    <property type="nucleotide sequence ID" value="NC_008555.1"/>
</dbReference>
<dbReference type="SMR" id="A0AIJ9"/>
<dbReference type="STRING" id="386043.lwe1413"/>
<dbReference type="GeneID" id="61189289"/>
<dbReference type="KEGG" id="lwe:lwe1413"/>
<dbReference type="eggNOG" id="COG1058">
    <property type="taxonomic scope" value="Bacteria"/>
</dbReference>
<dbReference type="eggNOG" id="COG1546">
    <property type="taxonomic scope" value="Bacteria"/>
</dbReference>
<dbReference type="HOGENOM" id="CLU_030805_9_3_9"/>
<dbReference type="OrthoDB" id="9801454at2"/>
<dbReference type="Proteomes" id="UP000000779">
    <property type="component" value="Chromosome"/>
</dbReference>
<dbReference type="CDD" id="cd00885">
    <property type="entry name" value="cinA"/>
    <property type="match status" value="1"/>
</dbReference>
<dbReference type="Gene3D" id="3.30.70.2860">
    <property type="match status" value="1"/>
</dbReference>
<dbReference type="Gene3D" id="3.90.950.20">
    <property type="entry name" value="CinA-like"/>
    <property type="match status" value="1"/>
</dbReference>
<dbReference type="Gene3D" id="3.40.980.10">
    <property type="entry name" value="MoaB/Mog-like domain"/>
    <property type="match status" value="1"/>
</dbReference>
<dbReference type="HAMAP" id="MF_00226_B">
    <property type="entry name" value="CinA_B"/>
    <property type="match status" value="1"/>
</dbReference>
<dbReference type="InterPro" id="IPR050101">
    <property type="entry name" value="CinA"/>
</dbReference>
<dbReference type="InterPro" id="IPR036653">
    <property type="entry name" value="CinA-like_C"/>
</dbReference>
<dbReference type="InterPro" id="IPR008136">
    <property type="entry name" value="CinA_C"/>
</dbReference>
<dbReference type="InterPro" id="IPR041424">
    <property type="entry name" value="CinA_KH"/>
</dbReference>
<dbReference type="InterPro" id="IPR008135">
    <property type="entry name" value="Competence-induced_CinA"/>
</dbReference>
<dbReference type="InterPro" id="IPR036425">
    <property type="entry name" value="MoaB/Mog-like_dom_sf"/>
</dbReference>
<dbReference type="InterPro" id="IPR001453">
    <property type="entry name" value="MoaB/Mog_dom"/>
</dbReference>
<dbReference type="NCBIfam" id="TIGR00200">
    <property type="entry name" value="cinA_nterm"/>
    <property type="match status" value="1"/>
</dbReference>
<dbReference type="NCBIfam" id="TIGR00177">
    <property type="entry name" value="molyb_syn"/>
    <property type="match status" value="1"/>
</dbReference>
<dbReference type="NCBIfam" id="TIGR00199">
    <property type="entry name" value="PncC_domain"/>
    <property type="match status" value="1"/>
</dbReference>
<dbReference type="NCBIfam" id="NF001813">
    <property type="entry name" value="PRK00549.1"/>
    <property type="match status" value="1"/>
</dbReference>
<dbReference type="PANTHER" id="PTHR13939">
    <property type="entry name" value="NICOTINAMIDE-NUCLEOTIDE AMIDOHYDROLASE PNCC"/>
    <property type="match status" value="1"/>
</dbReference>
<dbReference type="PANTHER" id="PTHR13939:SF0">
    <property type="entry name" value="NMN AMIDOHYDROLASE-LIKE PROTEIN YFAY"/>
    <property type="match status" value="1"/>
</dbReference>
<dbReference type="Pfam" id="PF02464">
    <property type="entry name" value="CinA"/>
    <property type="match status" value="1"/>
</dbReference>
<dbReference type="Pfam" id="PF18146">
    <property type="entry name" value="CinA_KH"/>
    <property type="match status" value="1"/>
</dbReference>
<dbReference type="Pfam" id="PF00994">
    <property type="entry name" value="MoCF_biosynth"/>
    <property type="match status" value="1"/>
</dbReference>
<dbReference type="PIRSF" id="PIRSF006728">
    <property type="entry name" value="CinA"/>
    <property type="match status" value="1"/>
</dbReference>
<dbReference type="SMART" id="SM00852">
    <property type="entry name" value="MoCF_biosynth"/>
    <property type="match status" value="1"/>
</dbReference>
<dbReference type="SUPFAM" id="SSF142433">
    <property type="entry name" value="CinA-like"/>
    <property type="match status" value="1"/>
</dbReference>
<dbReference type="SUPFAM" id="SSF53218">
    <property type="entry name" value="Molybdenum cofactor biosynthesis proteins"/>
    <property type="match status" value="1"/>
</dbReference>
<feature type="chain" id="PRO_1000058712" description="Putative competence-damage inducible protein">
    <location>
        <begin position="1"/>
        <end position="415"/>
    </location>
</feature>
<organism>
    <name type="scientific">Listeria welshimeri serovar 6b (strain ATCC 35897 / DSM 20650 / CCUG 15529 / CIP 8149 / NCTC 11857 / SLCC 5334 / V8)</name>
    <dbReference type="NCBI Taxonomy" id="386043"/>
    <lineage>
        <taxon>Bacteria</taxon>
        <taxon>Bacillati</taxon>
        <taxon>Bacillota</taxon>
        <taxon>Bacilli</taxon>
        <taxon>Bacillales</taxon>
        <taxon>Listeriaceae</taxon>
        <taxon>Listeria</taxon>
    </lineage>
</organism>